<proteinExistence type="evidence at protein level"/>
<sequence length="297" mass="32562">MDPGKDKEGVPQPSGPPARKKFVIPLDEDEVPPGVAKPLFRSTQSLPTVDTSAQAAPQTYAEYAISQPLEGAGATCPTGSEPLAGETPNQALKPGAKSNSIIVSPRQRGNPVLKFVRNVPWEFGDVIPDYVLGQSTCALFLSLRYHNLHPDYIHGRLQSLGKNFALRVLLVQVDVKDPQQALKELAKMCILADCTLILAWSPEEAGRYLETYKAYEQKPADLLMEKLEQDFVSRVTECLTTVKSVNKTDSQTLLTTFGSLEQLIAASREDLALCPGLGPQKARRLFDVLHEPFLKVP</sequence>
<feature type="chain" id="PRO_0000087006" description="DNA excision repair protein ERCC-1">
    <location>
        <begin position="1"/>
        <end position="297"/>
    </location>
</feature>
<feature type="DNA-binding region" evidence="1">
    <location>
        <begin position="134"/>
        <end position="156"/>
    </location>
</feature>
<feature type="region of interest" description="Disordered" evidence="2">
    <location>
        <begin position="1"/>
        <end position="39"/>
    </location>
</feature>
<feature type="region of interest" description="HhH2, dimerization with ERCC4/XPF" evidence="4">
    <location>
        <begin position="220"/>
        <end position="297"/>
    </location>
</feature>
<feature type="short sequence motif" description="Nuclear localization signal" evidence="1">
    <location>
        <begin position="17"/>
        <end position="23"/>
    </location>
</feature>
<feature type="modified residue" description="N-acetylmethionine" evidence="16">
    <location>
        <position position="1"/>
    </location>
</feature>
<feature type="cross-link" description="Glycyl lysine isopeptide (Lys-Gly) (interchain with G-Cter in SUMO2)" evidence="17">
    <location>
        <position position="21"/>
    </location>
</feature>
<feature type="cross-link" description="Glycyl lysine isopeptide (Lys-Gly) (interchain with G-Cter in SUMO2)" evidence="17">
    <location>
        <position position="37"/>
    </location>
</feature>
<feature type="cross-link" description="Glycyl lysine isopeptide (Lys-Gly) (interchain with G-Cter in SUMO2)" evidence="17">
    <location>
        <position position="243"/>
    </location>
</feature>
<feature type="splice variant" id="VSP_053474" description="In isoform 4." evidence="11">
    <location>
        <begin position="36"/>
        <end position="107"/>
    </location>
</feature>
<feature type="splice variant" id="VSP_042727" description="In isoform 2." evidence="13">
    <location>
        <begin position="235"/>
        <end position="258"/>
    </location>
</feature>
<feature type="splice variant" id="VSP_043455" description="In isoform 3." evidence="12">
    <original>ARRLFDVLHEPFLKVP</original>
    <variation>VRALGKNPRSWGKERAPNKHNLRPQSFKVKKEPKTRHSGFRL</variation>
    <location>
        <begin position="282"/>
        <end position="297"/>
    </location>
</feature>
<feature type="sequence variant" id="VAR_032776" description="In COFS4; does not alter interaction with ERCC4/XPF; dbSNP:rs121913028." evidence="5 6">
    <original>F</original>
    <variation>L</variation>
    <location>
        <position position="231"/>
    </location>
</feature>
<feature type="sequence variant" id="VAR_019167" description="In dbSNP:rs3212977." evidence="10">
    <original>A</original>
    <variation>T</variation>
    <location>
        <position position="266"/>
    </location>
</feature>
<feature type="mutagenesis site" description="Impaired interaction with ERCC4." evidence="9">
    <original>D</original>
    <variation>A</variation>
    <location>
        <position position="221"/>
    </location>
</feature>
<feature type="mutagenesis site" description="Impaired interaction with ERCC4." evidence="9">
    <original>L</original>
    <variation>A</variation>
    <location>
        <position position="223"/>
    </location>
</feature>
<feature type="mutagenesis site" description="Impaired interaction with ERCC4." evidence="9">
    <original>M</original>
    <variation>A</variation>
    <location>
        <position position="224"/>
    </location>
</feature>
<feature type="mutagenesis site" description="Impaired interaction with ERCC4." evidence="9">
    <original>E</original>
    <variation>A</variation>
    <location>
        <position position="225"/>
    </location>
</feature>
<feature type="mutagenesis site" description="Impaired interaction with ERCC4." evidence="9">
    <original>L</original>
    <variation>A</variation>
    <location>
        <position position="227"/>
    </location>
</feature>
<feature type="mutagenesis site" description="Impaired interaction with ERCC4." evidence="9">
    <original>E</original>
    <variation>A</variation>
    <location>
        <position position="228"/>
    </location>
</feature>
<feature type="sequence conflict" description="In Ref. 6; BAG37398." evidence="14" ref="6">
    <original>A</original>
    <variation>P</variation>
    <location>
        <position position="53"/>
    </location>
</feature>
<feature type="strand" evidence="19">
    <location>
        <begin position="101"/>
        <end position="103"/>
    </location>
</feature>
<feature type="helix" evidence="19">
    <location>
        <begin position="105"/>
        <end position="107"/>
    </location>
</feature>
<feature type="helix" evidence="19">
    <location>
        <begin position="111"/>
        <end position="115"/>
    </location>
</feature>
<feature type="strand" evidence="19">
    <location>
        <begin position="121"/>
        <end position="123"/>
    </location>
</feature>
<feature type="strand" evidence="19">
    <location>
        <begin position="127"/>
        <end position="133"/>
    </location>
</feature>
<feature type="strand" evidence="19">
    <location>
        <begin position="136"/>
        <end position="142"/>
    </location>
</feature>
<feature type="helix" evidence="19">
    <location>
        <begin position="143"/>
        <end position="148"/>
    </location>
</feature>
<feature type="helix" evidence="19">
    <location>
        <begin position="152"/>
        <end position="160"/>
    </location>
</feature>
<feature type="strand" evidence="19">
    <location>
        <begin position="163"/>
        <end position="172"/>
    </location>
</feature>
<feature type="strand" evidence="19">
    <location>
        <begin position="175"/>
        <end position="177"/>
    </location>
</feature>
<feature type="helix" evidence="19">
    <location>
        <begin position="179"/>
        <end position="192"/>
    </location>
</feature>
<feature type="strand" evidence="19">
    <location>
        <begin position="195"/>
        <end position="201"/>
    </location>
</feature>
<feature type="helix" evidence="19">
    <location>
        <begin position="202"/>
        <end position="213"/>
    </location>
</feature>
<feature type="helix" evidence="19">
    <location>
        <begin position="222"/>
        <end position="226"/>
    </location>
</feature>
<feature type="strand" evidence="18">
    <location>
        <begin position="242"/>
        <end position="244"/>
    </location>
</feature>
<feature type="helix" evidence="20">
    <location>
        <begin position="247"/>
        <end position="257"/>
    </location>
</feature>
<feature type="helix" evidence="20">
    <location>
        <begin position="260"/>
        <end position="264"/>
    </location>
</feature>
<feature type="helix" evidence="20">
    <location>
        <begin position="268"/>
        <end position="272"/>
    </location>
</feature>
<feature type="strand" evidence="20">
    <location>
        <begin position="274"/>
        <end position="276"/>
    </location>
</feature>
<feature type="helix" evidence="20">
    <location>
        <begin position="280"/>
        <end position="290"/>
    </location>
</feature>
<feature type="strand" evidence="18">
    <location>
        <begin position="293"/>
        <end position="295"/>
    </location>
</feature>
<gene>
    <name type="primary">ERCC1</name>
</gene>
<organism>
    <name type="scientific">Homo sapiens</name>
    <name type="common">Human</name>
    <dbReference type="NCBI Taxonomy" id="9606"/>
    <lineage>
        <taxon>Eukaryota</taxon>
        <taxon>Metazoa</taxon>
        <taxon>Chordata</taxon>
        <taxon>Craniata</taxon>
        <taxon>Vertebrata</taxon>
        <taxon>Euteleostomi</taxon>
        <taxon>Mammalia</taxon>
        <taxon>Eutheria</taxon>
        <taxon>Euarchontoglires</taxon>
        <taxon>Primates</taxon>
        <taxon>Haplorrhini</taxon>
        <taxon>Catarrhini</taxon>
        <taxon>Hominidae</taxon>
        <taxon>Homo</taxon>
    </lineage>
</organism>
<name>ERCC1_HUMAN</name>
<evidence type="ECO:0000255" key="1"/>
<evidence type="ECO:0000256" key="2">
    <source>
        <dbReference type="SAM" id="MobiDB-lite"/>
    </source>
</evidence>
<evidence type="ECO:0000269" key="3">
    <source>
    </source>
</evidence>
<evidence type="ECO:0000269" key="4">
    <source>
    </source>
</evidence>
<evidence type="ECO:0000269" key="5">
    <source>
    </source>
</evidence>
<evidence type="ECO:0000269" key="6">
    <source>
    </source>
</evidence>
<evidence type="ECO:0000269" key="7">
    <source>
    </source>
</evidence>
<evidence type="ECO:0000269" key="8">
    <source>
    </source>
</evidence>
<evidence type="ECO:0000269" key="9">
    <source>
    </source>
</evidence>
<evidence type="ECO:0000269" key="10">
    <source ref="5"/>
</evidence>
<evidence type="ECO:0000303" key="11">
    <source>
    </source>
</evidence>
<evidence type="ECO:0000303" key="12">
    <source>
    </source>
</evidence>
<evidence type="ECO:0000303" key="13">
    <source ref="4"/>
</evidence>
<evidence type="ECO:0000305" key="14"/>
<evidence type="ECO:0000305" key="15">
    <source>
    </source>
</evidence>
<evidence type="ECO:0007744" key="16">
    <source>
    </source>
</evidence>
<evidence type="ECO:0007744" key="17">
    <source>
    </source>
</evidence>
<evidence type="ECO:0007829" key="18">
    <source>
        <dbReference type="PDB" id="1Z00"/>
    </source>
</evidence>
<evidence type="ECO:0007829" key="19">
    <source>
        <dbReference type="PDB" id="2A1I"/>
    </source>
</evidence>
<evidence type="ECO:0007829" key="20">
    <source>
        <dbReference type="PDB" id="2A1J"/>
    </source>
</evidence>
<accession>P07992</accession>
<accession>B2RC01</accession>
<accession>B3KRR0</accession>
<accession>Q7Z7F5</accession>
<accession>Q96S40</accession>
<reference key="1">
    <citation type="journal article" date="1986" name="Cell">
        <title>Molecular characterization of the human excision repair gene ERCC-1: cDNA cloning and amino acid homology with the yeast DNA repair gene RAD10.</title>
        <authorList>
            <person name="van Duin M."/>
            <person name="de Wit J."/>
            <person name="Odijk H."/>
            <person name="Westerveld A."/>
            <person name="Yasui A."/>
            <person name="Koken M.H.M."/>
            <person name="Hoeijmakers J.H.J."/>
            <person name="Bootsma D."/>
        </authorList>
    </citation>
    <scope>NUCLEOTIDE SEQUENCE [MRNA] (ISOFORM 1)</scope>
</reference>
<reference key="2">
    <citation type="journal article" date="1986" name="Cold Spring Harb. Symp. Quant. Biol.">
        <title>Identification of DNA repair genes in the human genome.</title>
        <authorList>
            <person name="Hoeijmakers J.H.J."/>
            <person name="van Duin M."/>
            <person name="Westerveld A."/>
            <person name="Yasui A."/>
            <person name="Bootsma D."/>
        </authorList>
    </citation>
    <scope>NUCLEOTIDE SEQUENCE [GENOMIC DNA]</scope>
</reference>
<reference key="3">
    <citation type="journal article" date="1997" name="Mutat. Res.">
        <title>A nucleotide polymorphism in ERCC1 in human ovarian cancer cell lines and tumor tissues.</title>
        <authorList>
            <person name="Yu J.J."/>
            <person name="Mu C.J."/>
            <person name="Lee K.B."/>
            <person name="Okamoto A."/>
            <person name="Reed E.L."/>
            <person name="Bostick-Bruton F."/>
            <person name="Mitchell K.C."/>
            <person name="Reed E."/>
        </authorList>
    </citation>
    <scope>NUCLEOTIDE SEQUENCE [MRNA] (ISOFORM 1)</scope>
</reference>
<reference key="4">
    <citation type="submission" date="2001-08" db="EMBL/GenBank/DDBJ databases">
        <title>Human excision repair protein 1, transcript variant, mRNA.</title>
        <authorList>
            <person name="Hisatomi H."/>
            <person name="Nagao K."/>
            <person name="Ishikawa H."/>
            <person name="Yokoyama Y."/>
            <person name="Ishihara Y."/>
            <person name="Hikiji K."/>
            <person name="Iizuka T."/>
        </authorList>
    </citation>
    <scope>NUCLEOTIDE SEQUENCE [MRNA] (ISOFORM 2)</scope>
</reference>
<reference key="5">
    <citation type="submission" date="2002-05" db="EMBL/GenBank/DDBJ databases">
        <authorList>
            <consortium name="NIEHS SNPs program"/>
        </authorList>
    </citation>
    <scope>NUCLEOTIDE SEQUENCE [GENOMIC DNA]</scope>
    <scope>VARIANT THR-266</scope>
</reference>
<reference key="6">
    <citation type="journal article" date="2004" name="Nat. Genet.">
        <title>Complete sequencing and characterization of 21,243 full-length human cDNAs.</title>
        <authorList>
            <person name="Ota T."/>
            <person name="Suzuki Y."/>
            <person name="Nishikawa T."/>
            <person name="Otsuki T."/>
            <person name="Sugiyama T."/>
            <person name="Irie R."/>
            <person name="Wakamatsu A."/>
            <person name="Hayashi K."/>
            <person name="Sato H."/>
            <person name="Nagai K."/>
            <person name="Kimura K."/>
            <person name="Makita H."/>
            <person name="Sekine M."/>
            <person name="Obayashi M."/>
            <person name="Nishi T."/>
            <person name="Shibahara T."/>
            <person name="Tanaka T."/>
            <person name="Ishii S."/>
            <person name="Yamamoto J."/>
            <person name="Saito K."/>
            <person name="Kawai Y."/>
            <person name="Isono Y."/>
            <person name="Nakamura Y."/>
            <person name="Nagahari K."/>
            <person name="Murakami K."/>
            <person name="Yasuda T."/>
            <person name="Iwayanagi T."/>
            <person name="Wagatsuma M."/>
            <person name="Shiratori A."/>
            <person name="Sudo H."/>
            <person name="Hosoiri T."/>
            <person name="Kaku Y."/>
            <person name="Kodaira H."/>
            <person name="Kondo H."/>
            <person name="Sugawara M."/>
            <person name="Takahashi M."/>
            <person name="Kanda K."/>
            <person name="Yokoi T."/>
            <person name="Furuya T."/>
            <person name="Kikkawa E."/>
            <person name="Omura Y."/>
            <person name="Abe K."/>
            <person name="Kamihara K."/>
            <person name="Katsuta N."/>
            <person name="Sato K."/>
            <person name="Tanikawa M."/>
            <person name="Yamazaki M."/>
            <person name="Ninomiya K."/>
            <person name="Ishibashi T."/>
            <person name="Yamashita H."/>
            <person name="Murakawa K."/>
            <person name="Fujimori K."/>
            <person name="Tanai H."/>
            <person name="Kimata M."/>
            <person name="Watanabe M."/>
            <person name="Hiraoka S."/>
            <person name="Chiba Y."/>
            <person name="Ishida S."/>
            <person name="Ono Y."/>
            <person name="Takiguchi S."/>
            <person name="Watanabe S."/>
            <person name="Yosida M."/>
            <person name="Hotuta T."/>
            <person name="Kusano J."/>
            <person name="Kanehori K."/>
            <person name="Takahashi-Fujii A."/>
            <person name="Hara H."/>
            <person name="Tanase T.-O."/>
            <person name="Nomura Y."/>
            <person name="Togiya S."/>
            <person name="Komai F."/>
            <person name="Hara R."/>
            <person name="Takeuchi K."/>
            <person name="Arita M."/>
            <person name="Imose N."/>
            <person name="Musashino K."/>
            <person name="Yuuki H."/>
            <person name="Oshima A."/>
            <person name="Sasaki N."/>
            <person name="Aotsuka S."/>
            <person name="Yoshikawa Y."/>
            <person name="Matsunawa H."/>
            <person name="Ichihara T."/>
            <person name="Shiohata N."/>
            <person name="Sano S."/>
            <person name="Moriya S."/>
            <person name="Momiyama H."/>
            <person name="Satoh N."/>
            <person name="Takami S."/>
            <person name="Terashima Y."/>
            <person name="Suzuki O."/>
            <person name="Nakagawa S."/>
            <person name="Senoh A."/>
            <person name="Mizoguchi H."/>
            <person name="Goto Y."/>
            <person name="Shimizu F."/>
            <person name="Wakebe H."/>
            <person name="Hishigaki H."/>
            <person name="Watanabe T."/>
            <person name="Sugiyama A."/>
            <person name="Takemoto M."/>
            <person name="Kawakami B."/>
            <person name="Yamazaki M."/>
            <person name="Watanabe K."/>
            <person name="Kumagai A."/>
            <person name="Itakura S."/>
            <person name="Fukuzumi Y."/>
            <person name="Fujimori Y."/>
            <person name="Komiyama M."/>
            <person name="Tashiro H."/>
            <person name="Tanigami A."/>
            <person name="Fujiwara T."/>
            <person name="Ono T."/>
            <person name="Yamada K."/>
            <person name="Fujii Y."/>
            <person name="Ozaki K."/>
            <person name="Hirao M."/>
            <person name="Ohmori Y."/>
            <person name="Kawabata A."/>
            <person name="Hikiji T."/>
            <person name="Kobatake N."/>
            <person name="Inagaki H."/>
            <person name="Ikema Y."/>
            <person name="Okamoto S."/>
            <person name="Okitani R."/>
            <person name="Kawakami T."/>
            <person name="Noguchi S."/>
            <person name="Itoh T."/>
            <person name="Shigeta K."/>
            <person name="Senba T."/>
            <person name="Matsumura K."/>
            <person name="Nakajima Y."/>
            <person name="Mizuno T."/>
            <person name="Morinaga M."/>
            <person name="Sasaki M."/>
            <person name="Togashi T."/>
            <person name="Oyama M."/>
            <person name="Hata H."/>
            <person name="Watanabe M."/>
            <person name="Komatsu T."/>
            <person name="Mizushima-Sugano J."/>
            <person name="Satoh T."/>
            <person name="Shirai Y."/>
            <person name="Takahashi Y."/>
            <person name="Nakagawa K."/>
            <person name="Okumura K."/>
            <person name="Nagase T."/>
            <person name="Nomura N."/>
            <person name="Kikuchi H."/>
            <person name="Masuho Y."/>
            <person name="Yamashita R."/>
            <person name="Nakai K."/>
            <person name="Yada T."/>
            <person name="Nakamura Y."/>
            <person name="Ohara O."/>
            <person name="Isogai T."/>
            <person name="Sugano S."/>
        </authorList>
    </citation>
    <scope>NUCLEOTIDE SEQUENCE [LARGE SCALE MRNA] (ISOFORMS 1 AND 4)</scope>
    <source>
        <tissue>Cerebellum</tissue>
    </source>
</reference>
<reference key="7">
    <citation type="submission" date="2003-05" db="EMBL/GenBank/DDBJ databases">
        <title>Cloning of human full-length CDSs in BD Creator(TM) system donor vector.</title>
        <authorList>
            <person name="Kalnine N."/>
            <person name="Chen X."/>
            <person name="Rolfs A."/>
            <person name="Halleck A."/>
            <person name="Hines L."/>
            <person name="Eisenstein S."/>
            <person name="Koundinya M."/>
            <person name="Raphael J."/>
            <person name="Moreira D."/>
            <person name="Kelley T."/>
            <person name="LaBaer J."/>
            <person name="Lin Y."/>
            <person name="Phelan M."/>
            <person name="Farmer A."/>
        </authorList>
    </citation>
    <scope>NUCLEOTIDE SEQUENCE [LARGE SCALE MRNA] (ISOFORM 1)</scope>
</reference>
<reference key="8">
    <citation type="journal article" date="2004" name="Nature">
        <title>The DNA sequence and biology of human chromosome 19.</title>
        <authorList>
            <person name="Grimwood J."/>
            <person name="Gordon L.A."/>
            <person name="Olsen A.S."/>
            <person name="Terry A."/>
            <person name="Schmutz J."/>
            <person name="Lamerdin J.E."/>
            <person name="Hellsten U."/>
            <person name="Goodstein D."/>
            <person name="Couronne O."/>
            <person name="Tran-Gyamfi M."/>
            <person name="Aerts A."/>
            <person name="Altherr M."/>
            <person name="Ashworth L."/>
            <person name="Bajorek E."/>
            <person name="Black S."/>
            <person name="Branscomb E."/>
            <person name="Caenepeel S."/>
            <person name="Carrano A.V."/>
            <person name="Caoile C."/>
            <person name="Chan Y.M."/>
            <person name="Christensen M."/>
            <person name="Cleland C.A."/>
            <person name="Copeland A."/>
            <person name="Dalin E."/>
            <person name="Dehal P."/>
            <person name="Denys M."/>
            <person name="Detter J.C."/>
            <person name="Escobar J."/>
            <person name="Flowers D."/>
            <person name="Fotopulos D."/>
            <person name="Garcia C."/>
            <person name="Georgescu A.M."/>
            <person name="Glavina T."/>
            <person name="Gomez M."/>
            <person name="Gonzales E."/>
            <person name="Groza M."/>
            <person name="Hammon N."/>
            <person name="Hawkins T."/>
            <person name="Haydu L."/>
            <person name="Ho I."/>
            <person name="Huang W."/>
            <person name="Israni S."/>
            <person name="Jett J."/>
            <person name="Kadner K."/>
            <person name="Kimball H."/>
            <person name="Kobayashi A."/>
            <person name="Larionov V."/>
            <person name="Leem S.-H."/>
            <person name="Lopez F."/>
            <person name="Lou Y."/>
            <person name="Lowry S."/>
            <person name="Malfatti S."/>
            <person name="Martinez D."/>
            <person name="McCready P.M."/>
            <person name="Medina C."/>
            <person name="Morgan J."/>
            <person name="Nelson K."/>
            <person name="Nolan M."/>
            <person name="Ovcharenko I."/>
            <person name="Pitluck S."/>
            <person name="Pollard M."/>
            <person name="Popkie A.P."/>
            <person name="Predki P."/>
            <person name="Quan G."/>
            <person name="Ramirez L."/>
            <person name="Rash S."/>
            <person name="Retterer J."/>
            <person name="Rodriguez A."/>
            <person name="Rogers S."/>
            <person name="Salamov A."/>
            <person name="Salazar A."/>
            <person name="She X."/>
            <person name="Smith D."/>
            <person name="Slezak T."/>
            <person name="Solovyev V."/>
            <person name="Thayer N."/>
            <person name="Tice H."/>
            <person name="Tsai M."/>
            <person name="Ustaszewska A."/>
            <person name="Vo N."/>
            <person name="Wagner M."/>
            <person name="Wheeler J."/>
            <person name="Wu K."/>
            <person name="Xie G."/>
            <person name="Yang J."/>
            <person name="Dubchak I."/>
            <person name="Furey T.S."/>
            <person name="DeJong P."/>
            <person name="Dickson M."/>
            <person name="Gordon D."/>
            <person name="Eichler E.E."/>
            <person name="Pennacchio L.A."/>
            <person name="Richardson P."/>
            <person name="Stubbs L."/>
            <person name="Rokhsar D.S."/>
            <person name="Myers R.M."/>
            <person name="Rubin E.M."/>
            <person name="Lucas S.M."/>
        </authorList>
    </citation>
    <scope>NUCLEOTIDE SEQUENCE [LARGE SCALE GENOMIC DNA]</scope>
</reference>
<reference key="9">
    <citation type="submission" date="2005-07" db="EMBL/GenBank/DDBJ databases">
        <authorList>
            <person name="Mural R.J."/>
            <person name="Istrail S."/>
            <person name="Sutton G."/>
            <person name="Florea L."/>
            <person name="Halpern A.L."/>
            <person name="Mobarry C.M."/>
            <person name="Lippert R."/>
            <person name="Walenz B."/>
            <person name="Shatkay H."/>
            <person name="Dew I."/>
            <person name="Miller J.R."/>
            <person name="Flanigan M.J."/>
            <person name="Edwards N.J."/>
            <person name="Bolanos R."/>
            <person name="Fasulo D."/>
            <person name="Halldorsson B.V."/>
            <person name="Hannenhalli S."/>
            <person name="Turner R."/>
            <person name="Yooseph S."/>
            <person name="Lu F."/>
            <person name="Nusskern D.R."/>
            <person name="Shue B.C."/>
            <person name="Zheng X.H."/>
            <person name="Zhong F."/>
            <person name="Delcher A.L."/>
            <person name="Huson D.H."/>
            <person name="Kravitz S.A."/>
            <person name="Mouchard L."/>
            <person name="Reinert K."/>
            <person name="Remington K.A."/>
            <person name="Clark A.G."/>
            <person name="Waterman M.S."/>
            <person name="Eichler E.E."/>
            <person name="Adams M.D."/>
            <person name="Hunkapiller M.W."/>
            <person name="Myers E.W."/>
            <person name="Venter J.C."/>
        </authorList>
    </citation>
    <scope>NUCLEOTIDE SEQUENCE [LARGE SCALE GENOMIC DNA]</scope>
</reference>
<reference key="10">
    <citation type="journal article" date="2004" name="Genome Res.">
        <title>The status, quality, and expansion of the NIH full-length cDNA project: the Mammalian Gene Collection (MGC).</title>
        <authorList>
            <consortium name="The MGC Project Team"/>
        </authorList>
    </citation>
    <scope>NUCLEOTIDE SEQUENCE [LARGE SCALE MRNA] (ISOFORMS 1 AND 3)</scope>
    <source>
        <tissue>Lung</tissue>
        <tissue>Uterus</tissue>
    </source>
</reference>
<reference key="11">
    <citation type="journal article" date="2012" name="Proc. Natl. Acad. Sci. U.S.A.">
        <title>N-terminal acetylome analyses and functional insights of the N-terminal acetyltransferase NatB.</title>
        <authorList>
            <person name="Van Damme P."/>
            <person name="Lasa M."/>
            <person name="Polevoda B."/>
            <person name="Gazquez C."/>
            <person name="Elosegui-Artola A."/>
            <person name="Kim D.S."/>
            <person name="De Juan-Pardo E."/>
            <person name="Demeyer K."/>
            <person name="Hole K."/>
            <person name="Larrea E."/>
            <person name="Timmerman E."/>
            <person name="Prieto J."/>
            <person name="Arnesen T."/>
            <person name="Sherman F."/>
            <person name="Gevaert K."/>
            <person name="Aldabe R."/>
        </authorList>
    </citation>
    <scope>ACETYLATION [LARGE SCALE ANALYSIS] AT MET-1</scope>
    <scope>IDENTIFICATION BY MASS SPECTROMETRY [LARGE SCALE ANALYSIS]</scope>
</reference>
<reference key="12">
    <citation type="journal article" date="2013" name="Cell Cycle">
        <title>ERCC1 function in nuclear excision and interstrand crosslink repair pathways is mediated exclusively by the ERCC1-202 isoform.</title>
        <authorList>
            <person name="Friboulet L."/>
            <person name="Postel-Vinay S."/>
            <person name="Sourisseau T."/>
            <person name="Adam J."/>
            <person name="Stoclin A."/>
            <person name="Ponsonnailles F."/>
            <person name="Dorvault N."/>
            <person name="Commo F."/>
            <person name="Saulnier P."/>
            <person name="Salome-Desmoulez S."/>
            <person name="Pottier G."/>
            <person name="Andre F."/>
            <person name="Kroemer G."/>
            <person name="Soria J.C."/>
            <person name="Olaussen K.A."/>
        </authorList>
    </citation>
    <scope>FUNCTION (ISOFORMS 1; 2; 3 AND 4)</scope>
    <scope>SUBCELLULAR LOCATION (ISOFORMS 1; 2; 3 AND 4)</scope>
    <scope>SUBUNIT (ISOFORMS 1; 2; 3 AND 4)</scope>
</reference>
<reference key="13">
    <citation type="journal article" date="2013" name="N. Engl. J. Med.">
        <title>ERCC1 isoform expression and DNA repair in non-small-cell lung cancer.</title>
        <authorList>
            <person name="Friboulet L."/>
            <person name="Olaussen K.A."/>
            <person name="Pignon J.P."/>
            <person name="Shepherd F.A."/>
            <person name="Tsao M.S."/>
            <person name="Graziano S."/>
            <person name="Kratzke R."/>
            <person name="Douillard J.Y."/>
            <person name="Seymour L."/>
            <person name="Pirker R."/>
            <person name="Filipits M."/>
            <person name="Andre F."/>
            <person name="Solary E."/>
            <person name="Ponsonnailles F."/>
            <person name="Robin A."/>
            <person name="Stoclin A."/>
            <person name="Dorvault N."/>
            <person name="Commo F."/>
            <person name="Adam J."/>
            <person name="Vanhecke E."/>
            <person name="Saulnier P."/>
            <person name="Thomale J."/>
            <person name="Le Chevalier T."/>
            <person name="Dunant A."/>
            <person name="Rousseau V."/>
            <person name="Le Teuff G."/>
            <person name="Brambilla E."/>
            <person name="Soria J.C."/>
        </authorList>
    </citation>
    <scope>ALTERNATIVE SPLICING</scope>
</reference>
<reference key="14">
    <citation type="journal article" date="2015" name="EMBO J.">
        <title>USP45 deubiquitylase controls ERCC1-XPF endonuclease-mediated DNA damage responses.</title>
        <authorList>
            <person name="Perez-Oliva A.B."/>
            <person name="Lachaud C."/>
            <person name="Szyniarowski P."/>
            <person name="Munoz I."/>
            <person name="Macartney T."/>
            <person name="Hickson I."/>
            <person name="Rouse J."/>
            <person name="Alessi D.R."/>
        </authorList>
    </citation>
    <scope>INTERACTION WITH USP45 AND ERCC4</scope>
    <scope>UBIQUITINATION</scope>
    <scope>DEUBIQUITINATION BY USP45</scope>
</reference>
<reference key="15">
    <citation type="journal article" date="2017" name="Nat. Struct. Mol. Biol.">
        <title>Site-specific mapping of the human SUMO proteome reveals co-modification with phosphorylation.</title>
        <authorList>
            <person name="Hendriks I.A."/>
            <person name="Lyon D."/>
            <person name="Young C."/>
            <person name="Jensen L.J."/>
            <person name="Vertegaal A.C."/>
            <person name="Nielsen M.L."/>
        </authorList>
    </citation>
    <scope>SUMOYLATION [LARGE SCALE ANALYSIS] AT LYS-21; LYS-37 AND LYS-243</scope>
    <scope>IDENTIFICATION BY MASS SPECTROMETRY [LARGE SCALE ANALYSIS]</scope>
</reference>
<reference key="16">
    <citation type="journal article" date="2020" name="Nat. Commun.">
        <title>Acetylation of XPF by TIP60 facilitates XPF-ERCC1 complex assembly and activation.</title>
        <authorList>
            <person name="Wang J."/>
            <person name="He H."/>
            <person name="Chen B."/>
            <person name="Jiang G."/>
            <person name="Cao L."/>
            <person name="Jiang H."/>
            <person name="Zhang G."/>
            <person name="Chen J."/>
            <person name="Huang J."/>
            <person name="Yang B."/>
            <person name="Zhou C."/>
            <person name="Liu T."/>
        </authorList>
    </citation>
    <scope>INTERACTION WITH ERCC4</scope>
    <scope>MUTAGENESIS OF ASP-221; LEU-223; MET-224; GLU-225; LEU-227 AND GLU-228</scope>
</reference>
<reference key="17">
    <citation type="journal article" date="2005" name="Proc. Natl. Acad. Sci. U.S.A.">
        <title>Crystal structure and DNA binding functions of ERCC1, a subunit of the DNA structure-specific endonuclease XPF-ERCC1.</title>
        <authorList>
            <person name="Tsodikov O.V."/>
            <person name="Enzlin J.H."/>
            <person name="Scharer O.D."/>
            <person name="Ellenberger T."/>
        </authorList>
    </citation>
    <scope>X-RAY CRYSTALLOGRAPHY (1.9 ANGSTROMS) OF 96-227</scope>
    <scope>X-RAY CRYSTALLOGRAPHY (2.7 ANGSTROMS) OF 96-220-296 IN COMPLEX WIRH ERCC4</scope>
    <scope>SUBUNIT</scope>
</reference>
<reference key="18">
    <citation type="journal article" date="2005" name="Structure">
        <title>The structure of the human ERCC1/XPF interaction domains reveals a complementary role for the two proteins in nucleotide excision repair.</title>
        <authorList>
            <person name="Tripsianes K."/>
            <person name="Folkers G."/>
            <person name="Ab E."/>
            <person name="Das D."/>
            <person name="Odijk H."/>
            <person name="Jaspers N.G."/>
            <person name="Hoeijmakers J.H."/>
            <person name="Kaptein R."/>
            <person name="Boelens R."/>
        </authorList>
    </citation>
    <scope>STRUCTURE BY NMR OF 220-297 IN COMPLEX WIRH ERCC4</scope>
    <scope>SUBUNIT</scope>
</reference>
<reference key="19">
    <citation type="journal article" date="2007" name="Am. J. Hum. Genet.">
        <title>First reported patient with human ERCC1 deficiency has cerebro-oculo-facio-skeletal syndrome with a mild defect in nucleotide excision repair and severe developmental failure.</title>
        <authorList>
            <person name="Jaspers N.G.J."/>
            <person name="Raams A."/>
            <person name="Silengo M.C."/>
            <person name="Wijgers N."/>
            <person name="Niedernhofer L.J."/>
            <person name="Robinson A.R."/>
            <person name="Giglia-Mari G."/>
            <person name="Hoogstraten D."/>
            <person name="Kleijer W.J."/>
            <person name="Hoeijmakers J.H.J."/>
            <person name="Vermeulen W."/>
        </authorList>
    </citation>
    <scope>VARIANT COFS4 LEU-231</scope>
    <scope>CHARACTERIZATION OF VARIANT COFS4 LEU-231</scope>
    <scope>FUNCTION</scope>
    <scope>SUBUNIT</scope>
</reference>
<reference key="20">
    <citation type="journal article" date="2013" name="Am. J. Hum. Genet.">
        <title>Malfunction of nuclease ERCC1-XPF results in diverse clinical manifestations and causes Cockayne syndrome, xeroderma pigmentosum, and Fanconi anemia.</title>
        <authorList>
            <person name="Kashiyama K."/>
            <person name="Nakazawa Y."/>
            <person name="Pilz D.T."/>
            <person name="Guo C."/>
            <person name="Shimada M."/>
            <person name="Sasaki K."/>
            <person name="Fawcett H."/>
            <person name="Wing J.F."/>
            <person name="Lewin S.O."/>
            <person name="Carr L."/>
            <person name="Li T.S."/>
            <person name="Yoshiura K."/>
            <person name="Utani A."/>
            <person name="Hirano A."/>
            <person name="Yamashita S."/>
            <person name="Greenblatt D."/>
            <person name="Nardo T."/>
            <person name="Stefanini M."/>
            <person name="McGibbon D."/>
            <person name="Sarkany R."/>
            <person name="Fassihi H."/>
            <person name="Takahashi Y."/>
            <person name="Nagayama Y."/>
            <person name="Mitsutake N."/>
            <person name="Lehmann A.R."/>
            <person name="Ogi T."/>
        </authorList>
    </citation>
    <scope>VARIANT COFS4 LEU-231</scope>
    <scope>CHARACTERIZATION OF VARIANT COFS4 LEU-231</scope>
    <scope>FUNCTION</scope>
    <scope>INTERACTION WITH ERCC4</scope>
</reference>
<comment type="function">
    <molecule>Isoform 1</molecule>
    <text evidence="5 6 7">Non-catalytic component of a structure-specific DNA repair endonuclease responsible for the 5'-incision during DNA repair. Responsible, in conjunction with SLX4, for the first step in the repair of interstrand cross-links (ICL). Participates in the processing of anaphase bridge-generating DNA structures, which consist in incompletely processed DNA lesions arising during S or G2 phase, and can result in cytokinesis failure. Also required for homology-directed repair (HDR) of DNA double-strand breaks, in conjunction with SLX4.</text>
</comment>
<comment type="function">
    <molecule>Isoform 2</molecule>
    <text evidence="15">Not functional in the nucleotide excision repair pathway.</text>
</comment>
<comment type="function">
    <molecule>Isoform 3</molecule>
    <text evidence="15">Not functional in the nucleotide excision repair pathway.</text>
</comment>
<comment type="function">
    <molecule>Isoform 4</molecule>
    <text evidence="15">Not functional in the nucleotide excision repair pathway.</text>
</comment>
<comment type="subunit">
    <text evidence="3 4 7 8 9">Heterodimer composed of ERCC1 isoform 1 and ERCC4/XPF (PubMed:16076955, PubMed:16338413, PubMed:24036546, PubMed:25538220, PubMed:32034146). Interacts with USP45 (PubMed:25538220).</text>
</comment>
<comment type="subunit">
    <molecule>Isoform 2</molecule>
    <text evidence="7">Does not interact with ERCC4/XPF.</text>
</comment>
<comment type="subunit">
    <molecule>Isoform 3</molecule>
    <text evidence="7">Does not interact with ERCC4/XPF.</text>
</comment>
<comment type="subunit">
    <molecule>Isoform 4</molecule>
    <text evidence="7">Does not interact with ERCC4/XPF.</text>
</comment>
<comment type="interaction">
    <interactant intactId="EBI-750962">
        <id>P07992</id>
    </interactant>
    <interactant intactId="EBI-297353">
        <id>P00533</id>
        <label>EGFR</label>
    </interactant>
    <organismsDiffer>false</organismsDiffer>
    <experiments>21</experiments>
</comment>
<comment type="interaction">
    <interactant intactId="EBI-750962">
        <id>P07992</id>
    </interactant>
    <interactant intactId="EBI-2370770">
        <id>Q92889</id>
        <label>ERCC4</label>
    </interactant>
    <organismsDiffer>false</organismsDiffer>
    <experiments>14</experiments>
</comment>
<comment type="interaction">
    <interactant intactId="EBI-750962">
        <id>P07992</id>
    </interactant>
    <interactant intactId="EBI-2340269">
        <id>Q13064</id>
        <label>MKRN3</label>
    </interactant>
    <organismsDiffer>false</organismsDiffer>
    <experiments>3</experiments>
</comment>
<comment type="interaction">
    <interactant intactId="EBI-750962">
        <id>P07992</id>
    </interactant>
    <interactant intactId="EBI-10195599">
        <id>Q6NSB6</id>
        <label>MKRN3</label>
    </interactant>
    <organismsDiffer>false</organismsDiffer>
    <experiments>3</experiments>
</comment>
<comment type="interaction">
    <interactant intactId="EBI-750962">
        <id>P07992</id>
    </interactant>
    <interactant intactId="EBI-2370740">
        <id>Q8IY92</id>
        <label>SLX4</label>
    </interactant>
    <organismsDiffer>false</organismsDiffer>
    <experiments>6</experiments>
</comment>
<comment type="interaction">
    <interactant intactId="EBI-750962">
        <id>P07992</id>
    </interactant>
    <interactant intactId="EBI-10195625">
        <id>Q96GJ1</id>
        <label>TRMT2B</label>
    </interactant>
    <organismsDiffer>false</organismsDiffer>
    <experiments>3</experiments>
</comment>
<comment type="interaction">
    <interactant intactId="EBI-750962">
        <id>P07992</id>
    </interactant>
    <interactant intactId="EBI-348604">
        <id>Q96S82</id>
        <label>UBL7</label>
    </interactant>
    <organismsDiffer>false</organismsDiffer>
    <experiments>4</experiments>
</comment>
<comment type="interaction">
    <interactant intactId="EBI-750962">
        <id>P07992</id>
    </interactant>
    <interactant intactId="EBI-739895">
        <id>Q8N6Y0</id>
        <label>USHBP1</label>
    </interactant>
    <organismsDiffer>false</organismsDiffer>
    <experiments>3</experiments>
</comment>
<comment type="interaction">
    <interactant intactId="EBI-750962">
        <id>P07992</id>
    </interactant>
    <interactant intactId="EBI-4400866">
        <id>Q9H9H4</id>
        <label>VPS37B</label>
    </interactant>
    <organismsDiffer>false</organismsDiffer>
    <experiments>4</experiments>
</comment>
<comment type="interaction">
    <interactant intactId="EBI-750962">
        <id>P07992</id>
    </interactant>
    <interactant intactId="EBI-295222">
        <id>P23025</id>
        <label>XPA</label>
    </interactant>
    <organismsDiffer>false</organismsDiffer>
    <experiments>9</experiments>
</comment>
<comment type="interaction">
    <interactant intactId="EBI-12699417">
        <id>P07992-3</id>
    </interactant>
    <interactant intactId="EBI-1052570">
        <id>O95995</id>
        <label>GAS8</label>
    </interactant>
    <organismsDiffer>false</organismsDiffer>
    <experiments>3</experiments>
</comment>
<comment type="interaction">
    <interactant intactId="EBI-12699417">
        <id>P07992-3</id>
    </interactant>
    <interactant intactId="EBI-348604">
        <id>Q96S82</id>
        <label>UBL7</label>
    </interactant>
    <organismsDiffer>false</organismsDiffer>
    <experiments>3</experiments>
</comment>
<comment type="interaction">
    <interactant intactId="EBI-12699417">
        <id>P07992-3</id>
    </interactant>
    <interactant intactId="EBI-295222">
        <id>P23025</id>
        <label>XPA</label>
    </interactant>
    <organismsDiffer>false</organismsDiffer>
    <experiments>3</experiments>
</comment>
<comment type="subcellular location">
    <molecule>Isoform 1</molecule>
    <subcellularLocation>
        <location evidence="7">Nucleus</location>
    </subcellularLocation>
</comment>
<comment type="subcellular location">
    <molecule>Isoform 2</molecule>
    <subcellularLocation>
        <location evidence="7">Cytoplasm</location>
    </subcellularLocation>
    <subcellularLocation>
        <location evidence="7">Nucleus</location>
    </subcellularLocation>
</comment>
<comment type="subcellular location">
    <molecule>Isoform 3</molecule>
    <subcellularLocation>
        <location evidence="7">Nucleus</location>
    </subcellularLocation>
</comment>
<comment type="subcellular location">
    <molecule>Isoform 4</molecule>
    <subcellularLocation>
        <location evidence="7">Nucleus</location>
    </subcellularLocation>
</comment>
<comment type="alternative products">
    <event type="alternative splicing"/>
    <isoform>
        <id>P07992-1</id>
        <name>1</name>
        <name>202</name>
        <sequence type="displayed"/>
    </isoform>
    <isoform>
        <id>P07992-2</id>
        <name>2</name>
        <name>203</name>
        <sequence type="described" ref="VSP_042727"/>
    </isoform>
    <isoform>
        <id>P07992-3</id>
        <name>3</name>
        <name>201</name>
        <sequence type="described" ref="VSP_043455"/>
    </isoform>
    <isoform>
        <id>P07992-4</id>
        <name>4</name>
        <name>204</name>
        <sequence type="described" ref="VSP_053474"/>
    </isoform>
</comment>
<comment type="PTM">
    <text evidence="8">Ubiquitinated with both 'Lys-48' and 'Lys-63' linkages (PubMed:25538220). Deubiquitinated by USP45 (PubMed:25538220).</text>
</comment>
<comment type="disease" evidence="5 6">
    <disease id="DI-00260">
        <name>Cerebro-oculo-facio-skeletal syndrome 4</name>
        <acronym>COFS4</acronym>
        <description>A disorder of prenatal onset characterized by microcephaly, congenital cataracts, facial dysmorphism, neurogenic arthrogryposis, growth failure and severe psychomotor retardation. COFS is considered to be part of the nucleotide-excision repair disorders spectrum that include also xeroderma pigmentosum, trichothiodystrophy and Cockayne syndrome.</description>
        <dbReference type="MIM" id="610758"/>
    </disease>
    <text>The disease is caused by variants affecting the gene represented in this entry.</text>
</comment>
<comment type="similarity">
    <text evidence="14">Belongs to the ERCC1/RAD10/SWI10 family.</text>
</comment>
<comment type="online information" name="Atlas of Genetics and Cytogenetics in Oncology and Haematology">
    <link uri="https://atlasgeneticsoncology.org/gene/40481/ERCC1"/>
</comment>
<keyword id="KW-0002">3D-structure</keyword>
<keyword id="KW-0007">Acetylation</keyword>
<keyword id="KW-0025">Alternative splicing</keyword>
<keyword id="KW-0898">Cataract</keyword>
<keyword id="KW-0963">Cytoplasm</keyword>
<keyword id="KW-0227">DNA damage</keyword>
<keyword id="KW-0234">DNA repair</keyword>
<keyword id="KW-0238">DNA-binding</keyword>
<keyword id="KW-1017">Isopeptide bond</keyword>
<keyword id="KW-0539">Nucleus</keyword>
<keyword id="KW-1267">Proteomics identification</keyword>
<keyword id="KW-1185">Reference proteome</keyword>
<keyword id="KW-0832">Ubl conjugation</keyword>
<dbReference type="EMBL" id="M13194">
    <property type="protein sequence ID" value="AAA52394.1"/>
    <property type="molecule type" value="mRNA"/>
</dbReference>
<dbReference type="EMBL" id="M26163">
    <property type="protein sequence ID" value="AAA52395.1"/>
    <property type="molecule type" value="Genomic_DNA"/>
</dbReference>
<dbReference type="EMBL" id="M28650">
    <property type="protein sequence ID" value="AAA35810.1"/>
    <property type="molecule type" value="mRNA"/>
</dbReference>
<dbReference type="EMBL" id="AF001925">
    <property type="protein sequence ID" value="AAC16253.1"/>
    <property type="molecule type" value="mRNA"/>
</dbReference>
<dbReference type="EMBL" id="AB069681">
    <property type="protein sequence ID" value="BAB62810.1"/>
    <property type="molecule type" value="mRNA"/>
</dbReference>
<dbReference type="EMBL" id="BT019806">
    <property type="protein sequence ID" value="AAV38609.1"/>
    <property type="molecule type" value="mRNA"/>
</dbReference>
<dbReference type="EMBL" id="AF512555">
    <property type="protein sequence ID" value="AAM34796.1"/>
    <property type="molecule type" value="Genomic_DNA"/>
</dbReference>
<dbReference type="EMBL" id="AK092039">
    <property type="protein sequence ID" value="BAG52472.1"/>
    <property type="molecule type" value="mRNA"/>
</dbReference>
<dbReference type="EMBL" id="AK314884">
    <property type="protein sequence ID" value="BAG37398.1"/>
    <property type="molecule type" value="mRNA"/>
</dbReference>
<dbReference type="EMBL" id="AC092309">
    <property type="status" value="NOT_ANNOTATED_CDS"/>
    <property type="molecule type" value="Genomic_DNA"/>
</dbReference>
<dbReference type="EMBL" id="AC138128">
    <property type="status" value="NOT_ANNOTATED_CDS"/>
    <property type="molecule type" value="Genomic_DNA"/>
</dbReference>
<dbReference type="EMBL" id="AC138534">
    <property type="status" value="NOT_ANNOTATED_CDS"/>
    <property type="molecule type" value="Genomic_DNA"/>
</dbReference>
<dbReference type="EMBL" id="AC139353">
    <property type="status" value="NOT_ANNOTATED_CDS"/>
    <property type="molecule type" value="Genomic_DNA"/>
</dbReference>
<dbReference type="EMBL" id="CH471126">
    <property type="protein sequence ID" value="EAW57349.1"/>
    <property type="molecule type" value="Genomic_DNA"/>
</dbReference>
<dbReference type="EMBL" id="BC008930">
    <property type="protein sequence ID" value="AAH08930.1"/>
    <property type="molecule type" value="mRNA"/>
</dbReference>
<dbReference type="EMBL" id="BC052813">
    <property type="protein sequence ID" value="AAH52813.1"/>
    <property type="molecule type" value="mRNA"/>
</dbReference>
<dbReference type="CCDS" id="CCDS12662.1">
    <molecule id="P07992-1"/>
</dbReference>
<dbReference type="CCDS" id="CCDS12663.1">
    <molecule id="P07992-3"/>
</dbReference>
<dbReference type="CCDS" id="CCDS54279.1">
    <molecule id="P07992-2"/>
</dbReference>
<dbReference type="PIR" id="A32875">
    <property type="entry name" value="A24781"/>
</dbReference>
<dbReference type="RefSeq" id="NP_001159521.1">
    <molecule id="P07992-2"/>
    <property type="nucleotide sequence ID" value="NM_001166049.2"/>
</dbReference>
<dbReference type="RefSeq" id="NP_001356337.1">
    <molecule id="P07992-3"/>
    <property type="nucleotide sequence ID" value="NM_001369408.1"/>
</dbReference>
<dbReference type="RefSeq" id="NP_001356338.1">
    <molecule id="P07992-3"/>
    <property type="nucleotide sequence ID" value="NM_001369409.1"/>
</dbReference>
<dbReference type="RefSeq" id="NP_001356341.1">
    <molecule id="P07992-1"/>
    <property type="nucleotide sequence ID" value="NM_001369412.1"/>
</dbReference>
<dbReference type="RefSeq" id="NP_001356342.1">
    <molecule id="P07992-1"/>
    <property type="nucleotide sequence ID" value="NM_001369413.1"/>
</dbReference>
<dbReference type="RefSeq" id="NP_001356343.1">
    <molecule id="P07992-1"/>
    <property type="nucleotide sequence ID" value="NM_001369414.1"/>
</dbReference>
<dbReference type="RefSeq" id="NP_001356344.1">
    <molecule id="P07992-1"/>
    <property type="nucleotide sequence ID" value="NM_001369415.1"/>
</dbReference>
<dbReference type="RefSeq" id="NP_001356345.1">
    <molecule id="P07992-1"/>
    <property type="nucleotide sequence ID" value="NM_001369416.1"/>
</dbReference>
<dbReference type="RefSeq" id="NP_001356346.1">
    <molecule id="P07992-2"/>
    <property type="nucleotide sequence ID" value="NM_001369417.1"/>
</dbReference>
<dbReference type="RefSeq" id="NP_001356347.1">
    <molecule id="P07992-2"/>
    <property type="nucleotide sequence ID" value="NM_001369418.1"/>
</dbReference>
<dbReference type="RefSeq" id="NP_001356348.1">
    <molecule id="P07992-2"/>
    <property type="nucleotide sequence ID" value="NM_001369419.1"/>
</dbReference>
<dbReference type="RefSeq" id="NP_001974.1">
    <molecule id="P07992-1"/>
    <property type="nucleotide sequence ID" value="NM_001983.4"/>
</dbReference>
<dbReference type="RefSeq" id="NP_973730.1">
    <molecule id="P07992-3"/>
    <property type="nucleotide sequence ID" value="NM_202001.3"/>
</dbReference>
<dbReference type="RefSeq" id="XP_005258691.1">
    <property type="nucleotide sequence ID" value="XM_005258634.1"/>
</dbReference>
<dbReference type="RefSeq" id="XP_005258692.1">
    <property type="nucleotide sequence ID" value="XM_005258635.2"/>
</dbReference>
<dbReference type="RefSeq" id="XP_005258693.1">
    <property type="nucleotide sequence ID" value="XM_005258636.4"/>
</dbReference>
<dbReference type="RefSeq" id="XP_011524912.1">
    <property type="nucleotide sequence ID" value="XM_011526610.2"/>
</dbReference>
<dbReference type="RefSeq" id="XP_016881948.1">
    <property type="nucleotide sequence ID" value="XM_017026459.1"/>
</dbReference>
<dbReference type="RefSeq" id="XP_016881949.1">
    <property type="nucleotide sequence ID" value="XM_017026460.1"/>
</dbReference>
<dbReference type="RefSeq" id="XP_016881950.1">
    <property type="nucleotide sequence ID" value="XM_017026461.1"/>
</dbReference>
<dbReference type="RefSeq" id="XP_016881951.1">
    <property type="nucleotide sequence ID" value="XM_017026462.1"/>
</dbReference>
<dbReference type="RefSeq" id="XP_016881952.1">
    <property type="nucleotide sequence ID" value="XM_017026463.1"/>
</dbReference>
<dbReference type="RefSeq" id="XP_016881953.1">
    <property type="nucleotide sequence ID" value="XM_017026464.1"/>
</dbReference>
<dbReference type="RefSeq" id="XP_016881954.1">
    <property type="nucleotide sequence ID" value="XM_017026465.1"/>
</dbReference>
<dbReference type="RefSeq" id="XP_016881955.1">
    <property type="nucleotide sequence ID" value="XM_017026466.1"/>
</dbReference>
<dbReference type="PDB" id="1Z00">
    <property type="method" value="NMR"/>
    <property type="chains" value="A=220-297"/>
</dbReference>
<dbReference type="PDB" id="2A1I">
    <property type="method" value="X-ray"/>
    <property type="resolution" value="1.90 A"/>
    <property type="chains" value="A=96-227"/>
</dbReference>
<dbReference type="PDB" id="2A1J">
    <property type="method" value="X-ray"/>
    <property type="resolution" value="2.70 A"/>
    <property type="chains" value="B=220-296"/>
</dbReference>
<dbReference type="PDB" id="2JNW">
    <property type="method" value="NMR"/>
    <property type="chains" value="A=96-214"/>
</dbReference>
<dbReference type="PDB" id="2JPD">
    <property type="method" value="NMR"/>
    <property type="chains" value="A=96-219"/>
</dbReference>
<dbReference type="PDB" id="2MUT">
    <property type="method" value="NMR"/>
    <property type="chains" value="A=220-297"/>
</dbReference>
<dbReference type="PDB" id="6SXA">
    <property type="method" value="EM"/>
    <property type="resolution" value="3.60 A"/>
    <property type="chains" value="G=1-297"/>
</dbReference>
<dbReference type="PDB" id="6SXB">
    <property type="method" value="EM"/>
    <property type="resolution" value="7.90 A"/>
    <property type="chains" value="G=1-297"/>
</dbReference>
<dbReference type="PDBsum" id="1Z00"/>
<dbReference type="PDBsum" id="2A1I"/>
<dbReference type="PDBsum" id="2A1J"/>
<dbReference type="PDBsum" id="2JNW"/>
<dbReference type="PDBsum" id="2JPD"/>
<dbReference type="PDBsum" id="2MUT"/>
<dbReference type="PDBsum" id="6SXA"/>
<dbReference type="PDBsum" id="6SXB"/>
<dbReference type="BMRB" id="P07992"/>
<dbReference type="EMDB" id="EMD-10337"/>
<dbReference type="EMDB" id="EMD-10338"/>
<dbReference type="SMR" id="P07992"/>
<dbReference type="BioGRID" id="108379">
    <property type="interactions" value="59"/>
</dbReference>
<dbReference type="ComplexPortal" id="CPX-478">
    <molecule id="P07992-1"/>
    <property type="entry name" value="ERCC1-XPF endonuclease complex"/>
</dbReference>
<dbReference type="CORUM" id="P07992"/>
<dbReference type="DIP" id="DIP-24235N"/>
<dbReference type="FunCoup" id="P07992">
    <property type="interactions" value="1456"/>
</dbReference>
<dbReference type="IntAct" id="P07992">
    <property type="interactions" value="31"/>
</dbReference>
<dbReference type="MINT" id="P07992"/>
<dbReference type="STRING" id="9606.ENSP00000013807"/>
<dbReference type="BindingDB" id="P07992"/>
<dbReference type="ChEMBL" id="CHEMBL3883316"/>
<dbReference type="iPTMnet" id="P07992"/>
<dbReference type="PhosphoSitePlus" id="P07992"/>
<dbReference type="BioMuta" id="ERCC1"/>
<dbReference type="DMDM" id="119538"/>
<dbReference type="jPOST" id="P07992"/>
<dbReference type="MassIVE" id="P07992"/>
<dbReference type="PaxDb" id="9606-ENSP00000013807"/>
<dbReference type="PeptideAtlas" id="P07992"/>
<dbReference type="ProteomicsDB" id="3611"/>
<dbReference type="ProteomicsDB" id="52055">
    <molecule id="P07992-1"/>
</dbReference>
<dbReference type="ProteomicsDB" id="52056">
    <molecule id="P07992-2"/>
</dbReference>
<dbReference type="ProteomicsDB" id="52057">
    <molecule id="P07992-3"/>
</dbReference>
<dbReference type="Pumba" id="P07992"/>
<dbReference type="Antibodypedia" id="3826">
    <property type="antibodies" value="1394 antibodies from 43 providers"/>
</dbReference>
<dbReference type="DNASU" id="2067"/>
<dbReference type="Ensembl" id="ENST00000013807.9">
    <molecule id="P07992-3"/>
    <property type="protein sequence ID" value="ENSP00000013807.4"/>
    <property type="gene ID" value="ENSG00000012061.17"/>
</dbReference>
<dbReference type="Ensembl" id="ENST00000300853.8">
    <molecule id="P07992-1"/>
    <property type="protein sequence ID" value="ENSP00000300853.3"/>
    <property type="gene ID" value="ENSG00000012061.17"/>
</dbReference>
<dbReference type="Ensembl" id="ENST00000340192.11">
    <molecule id="P07992-2"/>
    <property type="protein sequence ID" value="ENSP00000345203.6"/>
    <property type="gene ID" value="ENSG00000012061.17"/>
</dbReference>
<dbReference type="Ensembl" id="ENST00000423698.6">
    <molecule id="P07992-4"/>
    <property type="protein sequence ID" value="ENSP00000394875.2"/>
    <property type="gene ID" value="ENSG00000012061.17"/>
</dbReference>
<dbReference type="Ensembl" id="ENST00000589165.5">
    <molecule id="P07992-1"/>
    <property type="protein sequence ID" value="ENSP00000468035.1"/>
    <property type="gene ID" value="ENSG00000012061.17"/>
</dbReference>
<dbReference type="GeneID" id="2067"/>
<dbReference type="KEGG" id="hsa:2067"/>
<dbReference type="MANE-Select" id="ENST00000300853.8">
    <property type="protein sequence ID" value="ENSP00000300853.3"/>
    <property type="RefSeq nucleotide sequence ID" value="NM_001983.4"/>
    <property type="RefSeq protein sequence ID" value="NP_001974.1"/>
</dbReference>
<dbReference type="UCSC" id="uc002pbs.3">
    <molecule id="P07992-1"/>
    <property type="organism name" value="human"/>
</dbReference>
<dbReference type="AGR" id="HGNC:3433"/>
<dbReference type="CTD" id="2067"/>
<dbReference type="DisGeNET" id="2067"/>
<dbReference type="GeneCards" id="ERCC1"/>
<dbReference type="GeneReviews" id="ERCC1"/>
<dbReference type="HGNC" id="HGNC:3433">
    <property type="gene designation" value="ERCC1"/>
</dbReference>
<dbReference type="HPA" id="ENSG00000012061">
    <property type="expression patterns" value="Low tissue specificity"/>
</dbReference>
<dbReference type="MalaCards" id="ERCC1"/>
<dbReference type="MIM" id="126380">
    <property type="type" value="gene"/>
</dbReference>
<dbReference type="MIM" id="610758">
    <property type="type" value="phenotype"/>
</dbReference>
<dbReference type="neXtProt" id="NX_P07992"/>
<dbReference type="OpenTargets" id="ENSG00000012061"/>
<dbReference type="Orphanet" id="90322">
    <property type="disease" value="Cockayne syndrome type 2"/>
</dbReference>
<dbReference type="Orphanet" id="1466">
    <property type="disease" value="COFS syndrome"/>
</dbReference>
<dbReference type="PharmGKB" id="PA155"/>
<dbReference type="VEuPathDB" id="HostDB:ENSG00000012061"/>
<dbReference type="eggNOG" id="KOG2841">
    <property type="taxonomic scope" value="Eukaryota"/>
</dbReference>
<dbReference type="GeneTree" id="ENSGT00390000011275"/>
<dbReference type="InParanoid" id="P07992"/>
<dbReference type="OMA" id="PHCVLVH"/>
<dbReference type="OrthoDB" id="10262814at2759"/>
<dbReference type="PAN-GO" id="P07992">
    <property type="GO annotations" value="8 GO annotations based on evolutionary models"/>
</dbReference>
<dbReference type="PhylomeDB" id="P07992"/>
<dbReference type="TreeFam" id="TF101231"/>
<dbReference type="PathwayCommons" id="P07992"/>
<dbReference type="Reactome" id="R-HSA-5685938">
    <property type="pathway name" value="HDR through Single Strand Annealing (SSA)"/>
</dbReference>
<dbReference type="Reactome" id="R-HSA-5696395">
    <property type="pathway name" value="Formation of Incision Complex in GG-NER"/>
</dbReference>
<dbReference type="Reactome" id="R-HSA-5696400">
    <property type="pathway name" value="Dual Incision in GG-NER"/>
</dbReference>
<dbReference type="Reactome" id="R-HSA-6782135">
    <property type="pathway name" value="Dual incision in TC-NER"/>
</dbReference>
<dbReference type="Reactome" id="R-HSA-6783310">
    <property type="pathway name" value="Fanconi Anemia Pathway"/>
</dbReference>
<dbReference type="SignaLink" id="P07992"/>
<dbReference type="SIGNOR" id="P07992"/>
<dbReference type="BioGRID-ORCS" id="2067">
    <property type="hits" value="103 hits in 1167 CRISPR screens"/>
</dbReference>
<dbReference type="ChiTaRS" id="ERCC1">
    <property type="organism name" value="human"/>
</dbReference>
<dbReference type="EvolutionaryTrace" id="P07992"/>
<dbReference type="GeneWiki" id="ERCC1"/>
<dbReference type="GenomeRNAi" id="2067"/>
<dbReference type="Pharos" id="P07992">
    <property type="development level" value="Tbio"/>
</dbReference>
<dbReference type="PRO" id="PR:P07992"/>
<dbReference type="Proteomes" id="UP000005640">
    <property type="component" value="Chromosome 19"/>
</dbReference>
<dbReference type="RNAct" id="P07992">
    <property type="molecule type" value="protein"/>
</dbReference>
<dbReference type="Bgee" id="ENSG00000012061">
    <property type="expression patterns" value="Expressed in apex of heart and 201 other cell types or tissues"/>
</dbReference>
<dbReference type="ExpressionAtlas" id="P07992">
    <property type="expression patterns" value="baseline and differential"/>
</dbReference>
<dbReference type="GO" id="GO:0000781">
    <property type="term" value="C:chromosome, telomeric region"/>
    <property type="evidence" value="ECO:0000314"/>
    <property type="project" value="UniProtKB"/>
</dbReference>
<dbReference type="GO" id="GO:0005737">
    <property type="term" value="C:cytoplasm"/>
    <property type="evidence" value="ECO:0007669"/>
    <property type="project" value="UniProtKB-SubCell"/>
</dbReference>
<dbReference type="GO" id="GO:0070522">
    <property type="term" value="C:ERCC4-ERCC1 complex"/>
    <property type="evidence" value="ECO:0000314"/>
    <property type="project" value="BHF-UCL"/>
</dbReference>
<dbReference type="GO" id="GO:0005654">
    <property type="term" value="C:nucleoplasm"/>
    <property type="evidence" value="ECO:0000314"/>
    <property type="project" value="HPA"/>
</dbReference>
<dbReference type="GO" id="GO:0000109">
    <property type="term" value="C:nucleotide-excision repair complex"/>
    <property type="evidence" value="ECO:0000314"/>
    <property type="project" value="UniProtKB"/>
</dbReference>
<dbReference type="GO" id="GO:0000110">
    <property type="term" value="C:nucleotide-excision repair factor 1 complex"/>
    <property type="evidence" value="ECO:0000314"/>
    <property type="project" value="UniProtKB"/>
</dbReference>
<dbReference type="GO" id="GO:0003684">
    <property type="term" value="F:damaged DNA binding"/>
    <property type="evidence" value="ECO:0000314"/>
    <property type="project" value="UniProtKB"/>
</dbReference>
<dbReference type="GO" id="GO:1990841">
    <property type="term" value="F:promoter-specific chromatin binding"/>
    <property type="evidence" value="ECO:0007669"/>
    <property type="project" value="Ensembl"/>
</dbReference>
<dbReference type="GO" id="GO:0003697">
    <property type="term" value="F:single-stranded DNA binding"/>
    <property type="evidence" value="ECO:0000314"/>
    <property type="project" value="UniProtKB"/>
</dbReference>
<dbReference type="GO" id="GO:0001094">
    <property type="term" value="F:TFIID-class transcription factor complex binding"/>
    <property type="evidence" value="ECO:0007669"/>
    <property type="project" value="Ensembl"/>
</dbReference>
<dbReference type="GO" id="GO:0008283">
    <property type="term" value="P:cell population proliferation"/>
    <property type="evidence" value="ECO:0007669"/>
    <property type="project" value="Ensembl"/>
</dbReference>
<dbReference type="GO" id="GO:0008340">
    <property type="term" value="P:determination of adult lifespan"/>
    <property type="evidence" value="ECO:0007669"/>
    <property type="project" value="Ensembl"/>
</dbReference>
<dbReference type="GO" id="GO:0006281">
    <property type="term" value="P:DNA repair"/>
    <property type="evidence" value="ECO:0000315"/>
    <property type="project" value="MGI"/>
</dbReference>
<dbReference type="GO" id="GO:0006303">
    <property type="term" value="P:double-strand break repair via nonhomologous end joining"/>
    <property type="evidence" value="ECO:0000315"/>
    <property type="project" value="BHF-UCL"/>
</dbReference>
<dbReference type="GO" id="GO:0048009">
    <property type="term" value="P:insulin-like growth factor receptor signaling pathway"/>
    <property type="evidence" value="ECO:0007669"/>
    <property type="project" value="Ensembl"/>
</dbReference>
<dbReference type="GO" id="GO:0036297">
    <property type="term" value="P:interstrand cross-link repair"/>
    <property type="evidence" value="ECO:0007669"/>
    <property type="project" value="Ensembl"/>
</dbReference>
<dbReference type="GO" id="GO:0045190">
    <property type="term" value="P:isotype switching"/>
    <property type="evidence" value="ECO:0007669"/>
    <property type="project" value="Ensembl"/>
</dbReference>
<dbReference type="GO" id="GO:0008584">
    <property type="term" value="P:male gonad development"/>
    <property type="evidence" value="ECO:0007669"/>
    <property type="project" value="Ensembl"/>
</dbReference>
<dbReference type="GO" id="GO:0006312">
    <property type="term" value="P:mitotic recombination"/>
    <property type="evidence" value="ECO:0000315"/>
    <property type="project" value="UniProtKB"/>
</dbReference>
<dbReference type="GO" id="GO:0035264">
    <property type="term" value="P:multicellular organism growth"/>
    <property type="evidence" value="ECO:0007669"/>
    <property type="project" value="Ensembl"/>
</dbReference>
<dbReference type="GO" id="GO:1905765">
    <property type="term" value="P:negative regulation of protection from non-homologous end joining at telomere"/>
    <property type="evidence" value="ECO:0000315"/>
    <property type="project" value="BHF-UCL"/>
</dbReference>
<dbReference type="GO" id="GO:0032205">
    <property type="term" value="P:negative regulation of telomere maintenance"/>
    <property type="evidence" value="ECO:0000315"/>
    <property type="project" value="UniProtKB"/>
</dbReference>
<dbReference type="GO" id="GO:0006289">
    <property type="term" value="P:nucleotide-excision repair"/>
    <property type="evidence" value="ECO:0000314"/>
    <property type="project" value="ComplexPortal"/>
</dbReference>
<dbReference type="GO" id="GO:0048477">
    <property type="term" value="P:oogenesis"/>
    <property type="evidence" value="ECO:0007669"/>
    <property type="project" value="Ensembl"/>
</dbReference>
<dbReference type="GO" id="GO:1904431">
    <property type="term" value="P:positive regulation of t-circle formation"/>
    <property type="evidence" value="ECO:0000250"/>
    <property type="project" value="BHF-UCL"/>
</dbReference>
<dbReference type="GO" id="GO:0060261">
    <property type="term" value="P:positive regulation of transcription initiation by RNA polymerase II"/>
    <property type="evidence" value="ECO:0007669"/>
    <property type="project" value="Ensembl"/>
</dbReference>
<dbReference type="GO" id="GO:0035166">
    <property type="term" value="P:post-embryonic hemopoiesis"/>
    <property type="evidence" value="ECO:0007669"/>
    <property type="project" value="Ensembl"/>
</dbReference>
<dbReference type="GO" id="GO:0000720">
    <property type="term" value="P:pyrimidine dimer repair by nucleotide-excision repair"/>
    <property type="evidence" value="ECO:0007669"/>
    <property type="project" value="Ensembl"/>
</dbReference>
<dbReference type="GO" id="GO:0090399">
    <property type="term" value="P:replicative senescence"/>
    <property type="evidence" value="ECO:0007669"/>
    <property type="project" value="Ensembl"/>
</dbReference>
<dbReference type="GO" id="GO:0006979">
    <property type="term" value="P:response to oxidative stress"/>
    <property type="evidence" value="ECO:0000315"/>
    <property type="project" value="UniProtKB"/>
</dbReference>
<dbReference type="GO" id="GO:0010165">
    <property type="term" value="P:response to X-ray"/>
    <property type="evidence" value="ECO:0007669"/>
    <property type="project" value="Ensembl"/>
</dbReference>
<dbReference type="GO" id="GO:0007283">
    <property type="term" value="P:spermatogenesis"/>
    <property type="evidence" value="ECO:0007669"/>
    <property type="project" value="Ensembl"/>
</dbReference>
<dbReference type="GO" id="GO:0006949">
    <property type="term" value="P:syncytium formation"/>
    <property type="evidence" value="ECO:0007669"/>
    <property type="project" value="Ensembl"/>
</dbReference>
<dbReference type="GO" id="GO:0090656">
    <property type="term" value="P:t-circle formation"/>
    <property type="evidence" value="ECO:0000250"/>
    <property type="project" value="BHF-UCL"/>
</dbReference>
<dbReference type="GO" id="GO:0061819">
    <property type="term" value="P:telomeric DNA-containing double minutes formation"/>
    <property type="evidence" value="ECO:0000315"/>
    <property type="project" value="BHF-UCL"/>
</dbReference>
<dbReference type="GO" id="GO:0009650">
    <property type="term" value="P:UV protection"/>
    <property type="evidence" value="ECO:0007669"/>
    <property type="project" value="Ensembl"/>
</dbReference>
<dbReference type="GO" id="GO:0070914">
    <property type="term" value="P:UV-damage excision repair"/>
    <property type="evidence" value="ECO:0000318"/>
    <property type="project" value="GO_Central"/>
</dbReference>
<dbReference type="CDD" id="cd22325">
    <property type="entry name" value="ERCC1_C-like"/>
    <property type="match status" value="1"/>
</dbReference>
<dbReference type="FunFam" id="1.10.150.20:FF:000017">
    <property type="entry name" value="DNA excision repair protein ERCC-1"/>
    <property type="match status" value="1"/>
</dbReference>
<dbReference type="FunFam" id="3.40.50.10130:FF:000001">
    <property type="entry name" value="DNA excision repair protein ERCC-1"/>
    <property type="match status" value="1"/>
</dbReference>
<dbReference type="Gene3D" id="3.40.50.10130">
    <property type="match status" value="1"/>
</dbReference>
<dbReference type="Gene3D" id="1.10.150.20">
    <property type="entry name" value="5' to 3' exonuclease, C-terminal subdomain"/>
    <property type="match status" value="1"/>
</dbReference>
<dbReference type="IDEAL" id="IID00364"/>
<dbReference type="InterPro" id="IPR047260">
    <property type="entry name" value="ERCC1-like_central_dom"/>
</dbReference>
<dbReference type="InterPro" id="IPR004579">
    <property type="entry name" value="ERCC1/RAD10/SWI10"/>
</dbReference>
<dbReference type="InterPro" id="IPR011335">
    <property type="entry name" value="Restrct_endonuc-II-like"/>
</dbReference>
<dbReference type="InterPro" id="IPR010994">
    <property type="entry name" value="RuvA_2-like"/>
</dbReference>
<dbReference type="NCBIfam" id="TIGR00597">
    <property type="entry name" value="rad10"/>
    <property type="match status" value="1"/>
</dbReference>
<dbReference type="PANTHER" id="PTHR12749:SF0">
    <property type="entry name" value="DNA EXCISION REPAIR PROTEIN ERCC-1"/>
    <property type="match status" value="1"/>
</dbReference>
<dbReference type="PANTHER" id="PTHR12749">
    <property type="entry name" value="EXCISION REPAIR CROSS-COMPLEMENTING 1 ERCC1"/>
    <property type="match status" value="1"/>
</dbReference>
<dbReference type="Pfam" id="PF14520">
    <property type="entry name" value="HHH_5"/>
    <property type="match status" value="1"/>
</dbReference>
<dbReference type="Pfam" id="PF03834">
    <property type="entry name" value="Rad10"/>
    <property type="match status" value="1"/>
</dbReference>
<dbReference type="SUPFAM" id="SSF52980">
    <property type="entry name" value="Restriction endonuclease-like"/>
    <property type="match status" value="1"/>
</dbReference>
<dbReference type="SUPFAM" id="SSF47781">
    <property type="entry name" value="RuvA domain 2-like"/>
    <property type="match status" value="1"/>
</dbReference>
<protein>
    <recommendedName>
        <fullName>DNA excision repair protein ERCC-1</fullName>
    </recommendedName>
</protein>